<organism>
    <name type="scientific">Synechococcus elongatus</name>
    <dbReference type="NCBI Taxonomy" id="32046"/>
    <lineage>
        <taxon>Bacteria</taxon>
        <taxon>Bacillati</taxon>
        <taxon>Cyanobacteriota</taxon>
        <taxon>Cyanophyceae</taxon>
        <taxon>Synechococcales</taxon>
        <taxon>Synechococcaceae</taxon>
        <taxon>Synechococcus</taxon>
    </lineage>
</organism>
<sequence length="469" mass="50746">MRHFHDTIAAIATAIVPQQGSIGIVRLSGAKAVAIAQSLFEAPGKQPWESHRILYGYVRDPQTKERVDEALLLLMLAPRSYTREDVVEFHCHGGLIPVQRVLQLCVAAGARLADPGEFTLRAFLNGRLDLTQAESVAELVAAQSTTAAQIALAGLTGKLARPLQQIRQTCLSLLAEIEARLDFTDELPPLDPAAIAEQIRQLQHQVEAFLATAERGALIRTGLKVAIVGRPNVGKSSLLNAWSRSDRAIVTDLPGTTRDIVESQLVVGGIPIQVLDTAGIRETDNLVEQIGVQRSRQAALSADLILLVIDASQGWTAADQAIYDQLQLKQRRQQAPQSVLVVLNKADLLSETTEVKDIPLPIAPIPTVLLSALSQRGIEQLEDAILHLVQGQGVSAANLDFAINQRQAGLLEQVHQSLNHVLAAIDAQLPLDFWTIDLHAAARALGTLTGEEVTESVLTEIFSRFCIGK</sequence>
<keyword id="KW-0963">Cytoplasm</keyword>
<keyword id="KW-0342">GTP-binding</keyword>
<keyword id="KW-0378">Hydrolase</keyword>
<keyword id="KW-0460">Magnesium</keyword>
<keyword id="KW-0479">Metal-binding</keyword>
<keyword id="KW-0547">Nucleotide-binding</keyword>
<keyword id="KW-0630">Potassium</keyword>
<keyword id="KW-0819">tRNA processing</keyword>
<dbReference type="EC" id="3.6.-.-" evidence="1"/>
<dbReference type="EMBL" id="AJ243535">
    <property type="protein sequence ID" value="CAB46651.1"/>
    <property type="molecule type" value="Genomic_DNA"/>
</dbReference>
<dbReference type="SMR" id="P0C8N9"/>
<dbReference type="GO" id="GO:0005829">
    <property type="term" value="C:cytosol"/>
    <property type="evidence" value="ECO:0007669"/>
    <property type="project" value="TreeGrafter"/>
</dbReference>
<dbReference type="GO" id="GO:0005525">
    <property type="term" value="F:GTP binding"/>
    <property type="evidence" value="ECO:0007669"/>
    <property type="project" value="UniProtKB-UniRule"/>
</dbReference>
<dbReference type="GO" id="GO:0003924">
    <property type="term" value="F:GTPase activity"/>
    <property type="evidence" value="ECO:0007669"/>
    <property type="project" value="UniProtKB-UniRule"/>
</dbReference>
<dbReference type="GO" id="GO:0046872">
    <property type="term" value="F:metal ion binding"/>
    <property type="evidence" value="ECO:0007669"/>
    <property type="project" value="UniProtKB-KW"/>
</dbReference>
<dbReference type="GO" id="GO:0030488">
    <property type="term" value="P:tRNA methylation"/>
    <property type="evidence" value="ECO:0007669"/>
    <property type="project" value="TreeGrafter"/>
</dbReference>
<dbReference type="GO" id="GO:0002098">
    <property type="term" value="P:tRNA wobble uridine modification"/>
    <property type="evidence" value="ECO:0007669"/>
    <property type="project" value="TreeGrafter"/>
</dbReference>
<dbReference type="CDD" id="cd04164">
    <property type="entry name" value="trmE"/>
    <property type="match status" value="1"/>
</dbReference>
<dbReference type="CDD" id="cd14858">
    <property type="entry name" value="TrmE_N"/>
    <property type="match status" value="1"/>
</dbReference>
<dbReference type="FunFam" id="3.30.1360.120:FF:000003">
    <property type="entry name" value="tRNA modification GTPase MnmE"/>
    <property type="match status" value="1"/>
</dbReference>
<dbReference type="FunFam" id="3.40.50.300:FF:000494">
    <property type="entry name" value="tRNA modification GTPase MnmE"/>
    <property type="match status" value="1"/>
</dbReference>
<dbReference type="Gene3D" id="3.40.50.300">
    <property type="entry name" value="P-loop containing nucleotide triphosphate hydrolases"/>
    <property type="match status" value="1"/>
</dbReference>
<dbReference type="Gene3D" id="3.30.1360.120">
    <property type="entry name" value="Probable tRNA modification gtpase trme, domain 1"/>
    <property type="match status" value="1"/>
</dbReference>
<dbReference type="Gene3D" id="1.20.120.430">
    <property type="entry name" value="tRNA modification GTPase MnmE domain 2"/>
    <property type="match status" value="1"/>
</dbReference>
<dbReference type="HAMAP" id="MF_00379">
    <property type="entry name" value="GTPase_MnmE"/>
    <property type="match status" value="1"/>
</dbReference>
<dbReference type="InterPro" id="IPR031168">
    <property type="entry name" value="G_TrmE"/>
</dbReference>
<dbReference type="InterPro" id="IPR006073">
    <property type="entry name" value="GTP-bd"/>
</dbReference>
<dbReference type="InterPro" id="IPR018948">
    <property type="entry name" value="GTP-bd_TrmE_N"/>
</dbReference>
<dbReference type="InterPro" id="IPR004520">
    <property type="entry name" value="GTPase_MnmE"/>
</dbReference>
<dbReference type="InterPro" id="IPR027368">
    <property type="entry name" value="MnmE_dom2"/>
</dbReference>
<dbReference type="InterPro" id="IPR025867">
    <property type="entry name" value="MnmE_helical"/>
</dbReference>
<dbReference type="InterPro" id="IPR027417">
    <property type="entry name" value="P-loop_NTPase"/>
</dbReference>
<dbReference type="InterPro" id="IPR005225">
    <property type="entry name" value="Small_GTP-bd"/>
</dbReference>
<dbReference type="InterPro" id="IPR027266">
    <property type="entry name" value="TrmE/GcvT_dom1"/>
</dbReference>
<dbReference type="NCBIfam" id="TIGR00450">
    <property type="entry name" value="mnmE_trmE_thdF"/>
    <property type="match status" value="1"/>
</dbReference>
<dbReference type="NCBIfam" id="NF003661">
    <property type="entry name" value="PRK05291.1-3"/>
    <property type="match status" value="1"/>
</dbReference>
<dbReference type="NCBIfam" id="TIGR00231">
    <property type="entry name" value="small_GTP"/>
    <property type="match status" value="1"/>
</dbReference>
<dbReference type="PANTHER" id="PTHR42714">
    <property type="entry name" value="TRNA MODIFICATION GTPASE GTPBP3"/>
    <property type="match status" value="1"/>
</dbReference>
<dbReference type="PANTHER" id="PTHR42714:SF2">
    <property type="entry name" value="TRNA MODIFICATION GTPASE GTPBP3, MITOCHONDRIAL"/>
    <property type="match status" value="1"/>
</dbReference>
<dbReference type="Pfam" id="PF01926">
    <property type="entry name" value="MMR_HSR1"/>
    <property type="match status" value="1"/>
</dbReference>
<dbReference type="Pfam" id="PF12631">
    <property type="entry name" value="MnmE_helical"/>
    <property type="match status" value="1"/>
</dbReference>
<dbReference type="Pfam" id="PF10396">
    <property type="entry name" value="TrmE_N"/>
    <property type="match status" value="1"/>
</dbReference>
<dbReference type="SUPFAM" id="SSF52540">
    <property type="entry name" value="P-loop containing nucleoside triphosphate hydrolases"/>
    <property type="match status" value="1"/>
</dbReference>
<dbReference type="PROSITE" id="PS51709">
    <property type="entry name" value="G_TRME"/>
    <property type="match status" value="1"/>
</dbReference>
<evidence type="ECO:0000255" key="1">
    <source>
        <dbReference type="HAMAP-Rule" id="MF_00379"/>
    </source>
</evidence>
<reference key="1">
    <citation type="journal article" date="2000" name="Biochim. Biophys. Acta">
        <title>Sequence of the two operons encoding the four core subunits of the cytochrome b6f complex from the thermophilic cyanobacterium Synechococcus elongatus.</title>
        <authorList>
            <person name="Schneider D."/>
            <person name="Altenfeld U."/>
            <person name="Thomas H."/>
            <person name="Schrader S."/>
            <person name="Muehlenhoff U."/>
            <person name="Roegner M."/>
        </authorList>
    </citation>
    <scope>NUCLEOTIDE SEQUENCE [GENOMIC DNA]</scope>
</reference>
<protein>
    <recommendedName>
        <fullName evidence="1">tRNA modification GTPase MnmE</fullName>
        <ecNumber evidence="1">3.6.-.-</ecNumber>
    </recommendedName>
</protein>
<proteinExistence type="inferred from homology"/>
<comment type="function">
    <text evidence="1">Exhibits a very high intrinsic GTPase hydrolysis rate. Involved in the addition of a carboxymethylaminomethyl (cmnm) group at the wobble position (U34) of certain tRNAs, forming tRNA-cmnm(5)s(2)U34.</text>
</comment>
<comment type="cofactor">
    <cofactor evidence="1">
        <name>K(+)</name>
        <dbReference type="ChEBI" id="CHEBI:29103"/>
    </cofactor>
    <text evidence="1">Binds 1 potassium ion per subunit.</text>
</comment>
<comment type="subunit">
    <text evidence="1">Homodimer. Heterotetramer of two MnmE and two MnmG subunits.</text>
</comment>
<comment type="subcellular location">
    <subcellularLocation>
        <location evidence="1">Cytoplasm</location>
    </subcellularLocation>
</comment>
<comment type="similarity">
    <text evidence="1">Belongs to the TRAFAC class TrmE-Era-EngA-EngB-Septin-like GTPase superfamily. TrmE GTPase family.</text>
</comment>
<accession>P0C8N9</accession>
<accession>Q9X9T0</accession>
<feature type="chain" id="PRO_0000188935" description="tRNA modification GTPase MnmE">
    <location>
        <begin position="1"/>
        <end position="469"/>
    </location>
</feature>
<feature type="domain" description="TrmE-type G">
    <location>
        <begin position="222"/>
        <end position="390"/>
    </location>
</feature>
<feature type="binding site" evidence="1">
    <location>
        <position position="26"/>
    </location>
    <ligand>
        <name>(6S)-5-formyl-5,6,7,8-tetrahydrofolate</name>
        <dbReference type="ChEBI" id="CHEBI:57457"/>
    </ligand>
</feature>
<feature type="binding site" evidence="1">
    <location>
        <position position="88"/>
    </location>
    <ligand>
        <name>(6S)-5-formyl-5,6,7,8-tetrahydrofolate</name>
        <dbReference type="ChEBI" id="CHEBI:57457"/>
    </ligand>
</feature>
<feature type="binding site" evidence="1">
    <location>
        <position position="127"/>
    </location>
    <ligand>
        <name>(6S)-5-formyl-5,6,7,8-tetrahydrofolate</name>
        <dbReference type="ChEBI" id="CHEBI:57457"/>
    </ligand>
</feature>
<feature type="binding site" evidence="1">
    <location>
        <begin position="232"/>
        <end position="237"/>
    </location>
    <ligand>
        <name>GTP</name>
        <dbReference type="ChEBI" id="CHEBI:37565"/>
    </ligand>
</feature>
<feature type="binding site" evidence="1">
    <location>
        <position position="232"/>
    </location>
    <ligand>
        <name>K(+)</name>
        <dbReference type="ChEBI" id="CHEBI:29103"/>
    </ligand>
</feature>
<feature type="binding site" evidence="1">
    <location>
        <position position="236"/>
    </location>
    <ligand>
        <name>Mg(2+)</name>
        <dbReference type="ChEBI" id="CHEBI:18420"/>
    </ligand>
</feature>
<feature type="binding site" evidence="1">
    <location>
        <begin position="251"/>
        <end position="257"/>
    </location>
    <ligand>
        <name>GTP</name>
        <dbReference type="ChEBI" id="CHEBI:37565"/>
    </ligand>
</feature>
<feature type="binding site" evidence="1">
    <location>
        <position position="251"/>
    </location>
    <ligand>
        <name>K(+)</name>
        <dbReference type="ChEBI" id="CHEBI:29103"/>
    </ligand>
</feature>
<feature type="binding site" evidence="1">
    <location>
        <position position="253"/>
    </location>
    <ligand>
        <name>K(+)</name>
        <dbReference type="ChEBI" id="CHEBI:29103"/>
    </ligand>
</feature>
<feature type="binding site" evidence="1">
    <location>
        <position position="256"/>
    </location>
    <ligand>
        <name>K(+)</name>
        <dbReference type="ChEBI" id="CHEBI:29103"/>
    </ligand>
</feature>
<feature type="binding site" evidence="1">
    <location>
        <position position="257"/>
    </location>
    <ligand>
        <name>Mg(2+)</name>
        <dbReference type="ChEBI" id="CHEBI:18420"/>
    </ligand>
</feature>
<feature type="binding site" evidence="1">
    <location>
        <begin position="276"/>
        <end position="279"/>
    </location>
    <ligand>
        <name>GTP</name>
        <dbReference type="ChEBI" id="CHEBI:37565"/>
    </ligand>
</feature>
<feature type="binding site" evidence="1">
    <location>
        <begin position="344"/>
        <end position="347"/>
    </location>
    <ligand>
        <name>GTP</name>
        <dbReference type="ChEBI" id="CHEBI:37565"/>
    </ligand>
</feature>
<feature type="binding site" evidence="1">
    <location>
        <position position="469"/>
    </location>
    <ligand>
        <name>(6S)-5-formyl-5,6,7,8-tetrahydrofolate</name>
        <dbReference type="ChEBI" id="CHEBI:57457"/>
    </ligand>
</feature>
<name>MNME_SYNEL</name>
<gene>
    <name evidence="1" type="primary">mnmE</name>
    <name evidence="1" type="synonym">thdF</name>
    <name evidence="1" type="synonym">trmE</name>
</gene>